<proteinExistence type="inferred from homology"/>
<evidence type="ECO:0000255" key="1">
    <source>
        <dbReference type="HAMAP-Rule" id="MF_00248"/>
    </source>
</evidence>
<protein>
    <recommendedName>
        <fullName evidence="1">ATP-dependent protease subunit HslV</fullName>
        <ecNumber evidence="1">3.4.25.2</ecNumber>
    </recommendedName>
</protein>
<sequence>MEQYRGTTILSVRRGNKVVIGGDGQVSLGNTIMKGNACKVRRLYKNQVIAGFAGGTADAFTLFERFEAKLEAHDGQLVRAAVELAKDWRTDRALRRLEALLAVANKDASLIVTGNGDVIQPENDLIAIGSGGAFAQSAARALLENTELEARDIVEKSLGIAGDVCVYTNHHFTIEELSF</sequence>
<comment type="function">
    <text evidence="1">Protease subunit of a proteasome-like degradation complex believed to be a general protein degrading machinery.</text>
</comment>
<comment type="catalytic activity">
    <reaction evidence="1">
        <text>ATP-dependent cleavage of peptide bonds with broad specificity.</text>
        <dbReference type="EC" id="3.4.25.2"/>
    </reaction>
</comment>
<comment type="activity regulation">
    <text evidence="1">Allosterically activated by HslU binding.</text>
</comment>
<comment type="subunit">
    <text evidence="1">A double ring-shaped homohexamer of HslV is capped on each side by a ring-shaped HslU homohexamer. The assembly of the HslU/HslV complex is dependent on binding of ATP.</text>
</comment>
<comment type="subcellular location">
    <subcellularLocation>
        <location evidence="1">Cytoplasm</location>
    </subcellularLocation>
</comment>
<comment type="similarity">
    <text evidence="1">Belongs to the peptidase T1B family. HslV subfamily.</text>
</comment>
<reference key="1">
    <citation type="journal article" date="2008" name="PLoS Genet.">
        <title>Complete genome sequence of the complex carbohydrate-degrading marine bacterium, Saccharophagus degradans strain 2-40 T.</title>
        <authorList>
            <person name="Weiner R.M."/>
            <person name="Taylor L.E. II"/>
            <person name="Henrissat B."/>
            <person name="Hauser L."/>
            <person name="Land M."/>
            <person name="Coutinho P.M."/>
            <person name="Rancurel C."/>
            <person name="Saunders E.H."/>
            <person name="Longmire A.G."/>
            <person name="Zhang H."/>
            <person name="Bayer E.A."/>
            <person name="Gilbert H.J."/>
            <person name="Larimer F."/>
            <person name="Zhulin I.B."/>
            <person name="Ekborg N.A."/>
            <person name="Lamed R."/>
            <person name="Richardson P.M."/>
            <person name="Borovok I."/>
            <person name="Hutcheson S."/>
        </authorList>
    </citation>
    <scope>NUCLEOTIDE SEQUENCE [LARGE SCALE GENOMIC DNA]</scope>
    <source>
        <strain>2-40 / ATCC 43961 / DSM 17024</strain>
    </source>
</reference>
<feature type="chain" id="PRO_1000012661" description="ATP-dependent protease subunit HslV">
    <location>
        <begin position="1"/>
        <end position="179"/>
    </location>
</feature>
<feature type="active site" evidence="1">
    <location>
        <position position="7"/>
    </location>
</feature>
<feature type="binding site" evidence="1">
    <location>
        <position position="162"/>
    </location>
    <ligand>
        <name>Na(+)</name>
        <dbReference type="ChEBI" id="CHEBI:29101"/>
    </ligand>
</feature>
<feature type="binding site" evidence="1">
    <location>
        <position position="165"/>
    </location>
    <ligand>
        <name>Na(+)</name>
        <dbReference type="ChEBI" id="CHEBI:29101"/>
    </ligand>
</feature>
<feature type="binding site" evidence="1">
    <location>
        <position position="168"/>
    </location>
    <ligand>
        <name>Na(+)</name>
        <dbReference type="ChEBI" id="CHEBI:29101"/>
    </ligand>
</feature>
<organism>
    <name type="scientific">Saccharophagus degradans (strain 2-40 / ATCC 43961 / DSM 17024)</name>
    <dbReference type="NCBI Taxonomy" id="203122"/>
    <lineage>
        <taxon>Bacteria</taxon>
        <taxon>Pseudomonadati</taxon>
        <taxon>Pseudomonadota</taxon>
        <taxon>Gammaproteobacteria</taxon>
        <taxon>Cellvibrionales</taxon>
        <taxon>Cellvibrionaceae</taxon>
        <taxon>Saccharophagus</taxon>
    </lineage>
</organism>
<dbReference type="EC" id="3.4.25.2" evidence="1"/>
<dbReference type="EMBL" id="CP000282">
    <property type="protein sequence ID" value="ABD81957.1"/>
    <property type="molecule type" value="Genomic_DNA"/>
</dbReference>
<dbReference type="RefSeq" id="WP_011469174.1">
    <property type="nucleotide sequence ID" value="NC_007912.1"/>
</dbReference>
<dbReference type="SMR" id="Q21H72"/>
<dbReference type="STRING" id="203122.Sde_2697"/>
<dbReference type="MEROPS" id="T01.006"/>
<dbReference type="GeneID" id="98614355"/>
<dbReference type="KEGG" id="sde:Sde_2697"/>
<dbReference type="eggNOG" id="COG5405">
    <property type="taxonomic scope" value="Bacteria"/>
</dbReference>
<dbReference type="HOGENOM" id="CLU_093872_1_0_6"/>
<dbReference type="OrthoDB" id="9804884at2"/>
<dbReference type="Proteomes" id="UP000001947">
    <property type="component" value="Chromosome"/>
</dbReference>
<dbReference type="GO" id="GO:0009376">
    <property type="term" value="C:HslUV protease complex"/>
    <property type="evidence" value="ECO:0007669"/>
    <property type="project" value="UniProtKB-UniRule"/>
</dbReference>
<dbReference type="GO" id="GO:0005839">
    <property type="term" value="C:proteasome core complex"/>
    <property type="evidence" value="ECO:0007669"/>
    <property type="project" value="InterPro"/>
</dbReference>
<dbReference type="GO" id="GO:0046872">
    <property type="term" value="F:metal ion binding"/>
    <property type="evidence" value="ECO:0007669"/>
    <property type="project" value="UniProtKB-KW"/>
</dbReference>
<dbReference type="GO" id="GO:0004298">
    <property type="term" value="F:threonine-type endopeptidase activity"/>
    <property type="evidence" value="ECO:0007669"/>
    <property type="project" value="UniProtKB-KW"/>
</dbReference>
<dbReference type="GO" id="GO:0051603">
    <property type="term" value="P:proteolysis involved in protein catabolic process"/>
    <property type="evidence" value="ECO:0007669"/>
    <property type="project" value="InterPro"/>
</dbReference>
<dbReference type="CDD" id="cd01913">
    <property type="entry name" value="protease_HslV"/>
    <property type="match status" value="1"/>
</dbReference>
<dbReference type="FunFam" id="3.60.20.10:FF:000002">
    <property type="entry name" value="ATP-dependent protease subunit HslV"/>
    <property type="match status" value="1"/>
</dbReference>
<dbReference type="Gene3D" id="3.60.20.10">
    <property type="entry name" value="Glutamine Phosphoribosylpyrophosphate, subunit 1, domain 1"/>
    <property type="match status" value="1"/>
</dbReference>
<dbReference type="HAMAP" id="MF_00248">
    <property type="entry name" value="HslV"/>
    <property type="match status" value="1"/>
</dbReference>
<dbReference type="InterPro" id="IPR022281">
    <property type="entry name" value="ATP-dep_Prtase_HsIV_su"/>
</dbReference>
<dbReference type="InterPro" id="IPR029055">
    <property type="entry name" value="Ntn_hydrolases_N"/>
</dbReference>
<dbReference type="InterPro" id="IPR001353">
    <property type="entry name" value="Proteasome_sua/b"/>
</dbReference>
<dbReference type="InterPro" id="IPR023333">
    <property type="entry name" value="Proteasome_suB-type"/>
</dbReference>
<dbReference type="NCBIfam" id="TIGR03692">
    <property type="entry name" value="ATP_dep_HslV"/>
    <property type="match status" value="1"/>
</dbReference>
<dbReference type="NCBIfam" id="NF003964">
    <property type="entry name" value="PRK05456.1"/>
    <property type="match status" value="1"/>
</dbReference>
<dbReference type="PANTHER" id="PTHR32194:SF0">
    <property type="entry name" value="ATP-DEPENDENT PROTEASE SUBUNIT HSLV"/>
    <property type="match status" value="1"/>
</dbReference>
<dbReference type="PANTHER" id="PTHR32194">
    <property type="entry name" value="METALLOPROTEASE TLDD"/>
    <property type="match status" value="1"/>
</dbReference>
<dbReference type="Pfam" id="PF00227">
    <property type="entry name" value="Proteasome"/>
    <property type="match status" value="1"/>
</dbReference>
<dbReference type="PIRSF" id="PIRSF039093">
    <property type="entry name" value="HslV"/>
    <property type="match status" value="1"/>
</dbReference>
<dbReference type="SUPFAM" id="SSF56235">
    <property type="entry name" value="N-terminal nucleophile aminohydrolases (Ntn hydrolases)"/>
    <property type="match status" value="1"/>
</dbReference>
<dbReference type="PROSITE" id="PS51476">
    <property type="entry name" value="PROTEASOME_BETA_2"/>
    <property type="match status" value="1"/>
</dbReference>
<name>HSLV_SACD2</name>
<keyword id="KW-0021">Allosteric enzyme</keyword>
<keyword id="KW-0963">Cytoplasm</keyword>
<keyword id="KW-0378">Hydrolase</keyword>
<keyword id="KW-0479">Metal-binding</keyword>
<keyword id="KW-0645">Protease</keyword>
<keyword id="KW-1185">Reference proteome</keyword>
<keyword id="KW-0915">Sodium</keyword>
<keyword id="KW-0888">Threonine protease</keyword>
<gene>
    <name evidence="1" type="primary">hslV</name>
    <name type="ordered locus">Sde_2697</name>
</gene>
<accession>Q21H72</accession>